<organism>
    <name type="scientific">Homo sapiens</name>
    <name type="common">Human</name>
    <dbReference type="NCBI Taxonomy" id="9606"/>
    <lineage>
        <taxon>Eukaryota</taxon>
        <taxon>Metazoa</taxon>
        <taxon>Chordata</taxon>
        <taxon>Craniata</taxon>
        <taxon>Vertebrata</taxon>
        <taxon>Euteleostomi</taxon>
        <taxon>Mammalia</taxon>
        <taxon>Eutheria</taxon>
        <taxon>Euarchontoglires</taxon>
        <taxon>Primates</taxon>
        <taxon>Haplorrhini</taxon>
        <taxon>Catarrhini</taxon>
        <taxon>Hominidae</taxon>
        <taxon>Homo</taxon>
    </lineage>
</organism>
<sequence>MGVQGFQDYIEKHCPSAVVPVELQKLARGSLVGGGRQRPPQTPLRLLVDADNCLHRLYGGFYTDWVSGGQWNHMLGYLAALAKACFGGNIELFVFFNGALEKARLHEWVKRQGNERQTAQQIVSHVQNKGTPPPKVWFLPPVCMAHCIRLALIRFHVKVAQSIEDHHQEVIGFCRENGFHGLVAYDSDYALCNIPYYFSAHALKLSRNGKSLTTSQYLMHEVAKQLDLNPNRFPIFAALLGNHILPDEDLASFHWSLLGPEHPLASLKVRAHQLVLPPCDVVIKAVADYVRNIQDTSDLDAIAKDVFQHSQSRTDDKVIRFKRAIGYYSATSKPMSFHPPHYLAARPGPFGMPGMVPPHVPPQMLNIPQTSLQAKPVAPQVPSPGGAPGQGPYPYSLSEPAPLTLDTSGKNLTEQNSYSNIPHEGKHTPLYERSSPINPAQSGSPNHVDSAYFPGSSTSSSSDNDEGSGGATNHISGNKIGWEKTGSHSEPQARGDPGDQTKAEGSSTASSGSQLAEGKGSQMGTVQPIPCLLSMPTRNHMDITTPPLPPVAPEVLRVAEHRHKKGLMYPYIFHVLTKGEIKIAVSIEDEANKDLPPAALLYRPVRQYVYGVLFSLAESRKKTERLAFRKNRLPPEFSPVIIKEWAAYKGKSPQTPELVEALAFREWTCPNLKRLWLGKAVEDKNRRMRAFLACMRSDTPAMLNPANVPTHLMVLCCVLRYMVQWPGARILRRQELDAFLAQALSPKLYEPDQLQELKIENLDPRGIQLSALFMSGVDMALFANDACGQPIPWEHCCPWMYFDGKLFQSKLLKASREKTPLIDLCDGQADQAAKVEKMRQSVLEGLSFSRQSHTLPFPPPPALPFYPASAYPRHFGPVPPSQGRGRGFAGVCGFGGPYGETVATGPYRAFRVAAASGHCGAFSGSDSSRTSKSQGGVQPIPSQGGKLEIAGTVVGHWAGSRRGRGGRGPFPLQVVSVGGPARGRPRGVISTPVIRTFGRGGRYYGRGYKNQAAIQGRPPYAASAEEVAKELKSKSGESKSSAMSSDGSLAENGVMAEEKPAPQMNGSTGDARAPSHSESALNNDSKTCNTNPHLNALSTDSACRREAALEAAVLNKEE</sequence>
<feature type="chain" id="PRO_0000221627" description="Constitutive coactivator of PPAR-gamma-like protein 1">
    <location>
        <begin position="1"/>
        <end position="1118"/>
    </location>
</feature>
<feature type="region of interest" description="Interaction with YES1, SRC and FYN" evidence="4">
    <location>
        <begin position="339"/>
        <end position="405"/>
    </location>
</feature>
<feature type="region of interest" description="Disordered" evidence="2">
    <location>
        <begin position="374"/>
        <end position="533"/>
    </location>
</feature>
<feature type="region of interest" description="RNA binding" evidence="4">
    <location>
        <begin position="829"/>
        <end position="1118"/>
    </location>
</feature>
<feature type="region of interest" description="Disordered" evidence="2">
    <location>
        <begin position="921"/>
        <end position="945"/>
    </location>
</feature>
<feature type="region of interest" description="Disordered" evidence="2">
    <location>
        <begin position="1025"/>
        <end position="1102"/>
    </location>
</feature>
<feature type="compositionally biased region" description="Low complexity" evidence="2">
    <location>
        <begin position="376"/>
        <end position="396"/>
    </location>
</feature>
<feature type="compositionally biased region" description="Polar residues" evidence="2">
    <location>
        <begin position="405"/>
        <end position="420"/>
    </location>
</feature>
<feature type="compositionally biased region" description="Polar residues" evidence="2">
    <location>
        <begin position="435"/>
        <end position="447"/>
    </location>
</feature>
<feature type="compositionally biased region" description="Basic and acidic residues" evidence="2">
    <location>
        <begin position="481"/>
        <end position="502"/>
    </location>
</feature>
<feature type="compositionally biased region" description="Polar residues" evidence="2">
    <location>
        <begin position="503"/>
        <end position="514"/>
    </location>
</feature>
<feature type="compositionally biased region" description="Polar residues" evidence="2">
    <location>
        <begin position="924"/>
        <end position="936"/>
    </location>
</feature>
<feature type="compositionally biased region" description="Basic and acidic residues" evidence="2">
    <location>
        <begin position="1026"/>
        <end position="1037"/>
    </location>
</feature>
<feature type="compositionally biased region" description="Low complexity" evidence="2">
    <location>
        <begin position="1038"/>
        <end position="1051"/>
    </location>
</feature>
<feature type="compositionally biased region" description="Polar residues" evidence="2">
    <location>
        <begin position="1076"/>
        <end position="1101"/>
    </location>
</feature>
<feature type="modified residue" description="Phosphothreonine" evidence="15">
    <location>
        <position position="655"/>
    </location>
</feature>
<feature type="modified residue" description="Omega-N-methylarginine" evidence="16">
    <location>
        <position position="873"/>
    </location>
</feature>
<feature type="modified residue" description="Omega-N-methylarginine" evidence="16">
    <location>
        <position position="884"/>
    </location>
</feature>
<feature type="modified residue" description="Omega-N-methylarginine" evidence="16">
    <location>
        <position position="886"/>
    </location>
</feature>
<feature type="modified residue" description="N6-acetyllysine" evidence="1">
    <location>
        <position position="932"/>
    </location>
</feature>
<feature type="modified residue" description="Phosphoserine" evidence="17">
    <location>
        <position position="960"/>
    </location>
</feature>
<feature type="modified residue" description="Omega-N-methylarginine" evidence="16">
    <location>
        <position position="982"/>
    </location>
</feature>
<feature type="modified residue" description="Omega-N-methylarginine" evidence="16">
    <location>
        <position position="986"/>
    </location>
</feature>
<feature type="modified residue" description="Phosphoserine" evidence="13 15">
    <location>
        <position position="1023"/>
    </location>
</feature>
<feature type="modified residue" description="Phosphoserine" evidence="14">
    <location>
        <position position="1044"/>
    </location>
</feature>
<feature type="modified residue" description="Phosphoserine" evidence="14">
    <location>
        <position position="1045"/>
    </location>
</feature>
<feature type="modified residue" description="Phosphoserine" evidence="14">
    <location>
        <position position="1048"/>
    </location>
</feature>
<feature type="splice variant" id="VSP_036324" description="In isoform F." evidence="6">
    <original>N</original>
    <variation>KPFQLYLQKNFVFHKENSIVLCSRILRHG</variation>
    <location>
        <position position="473"/>
    </location>
</feature>
<feature type="splice variant" id="VSP_004147" description="In isoform B." evidence="9">
    <original>GEIKIAVSIEDEANKDLPPAALLYRPVRQYVYGVLFSLAESRKKTERLAF</original>
    <variation>VLSKGPWSGFCYLMSGHSYGCFVLLSFFEPFFCLTNLLETKFTFPFLNIE</variation>
    <location>
        <begin position="579"/>
        <end position="628"/>
    </location>
</feature>
<feature type="splice variant" id="VSP_004148" description="In isoform B." evidence="9">
    <location>
        <begin position="629"/>
        <end position="1118"/>
    </location>
</feature>
<feature type="splice variant" id="VSP_017278" description="In isoform E." evidence="7">
    <original>FSPVIIKEWAAYKGK</original>
    <variation>CMYCNNPLFVFLGTS</variation>
    <location>
        <begin position="637"/>
        <end position="651"/>
    </location>
</feature>
<feature type="splice variant" id="VSP_017279" description="In isoform E." evidence="7">
    <location>
        <begin position="652"/>
        <end position="1118"/>
    </location>
</feature>
<feature type="splice variant" id="VSP_017280" description="In isoform D." evidence="10">
    <location>
        <begin position="890"/>
        <end position="935"/>
    </location>
</feature>
<feature type="sequence variant" id="VAR_054400" description="In dbSNP:rs11541747.">
    <original>Y</original>
    <variation>H</variation>
    <location>
        <position position="327"/>
    </location>
</feature>
<feature type="sequence conflict" description="In Ref. 1; AAF72867." evidence="11" ref="1">
    <original>EGKG</original>
    <variation>DSRR</variation>
    <location>
        <begin position="517"/>
        <end position="520"/>
    </location>
</feature>
<feature type="sequence conflict" description="In Ref. 1; AAF72867." evidence="11" ref="1">
    <original>L</original>
    <variation>V</variation>
    <location>
        <position position="556"/>
    </location>
</feature>
<dbReference type="EMBL" id="AF214737">
    <property type="protein sequence ID" value="AAF72866.1"/>
    <property type="status" value="ALT_FRAME"/>
    <property type="molecule type" value="mRNA"/>
</dbReference>
<dbReference type="EMBL" id="AF214738">
    <property type="protein sequence ID" value="AAF72867.1"/>
    <property type="molecule type" value="mRNA"/>
</dbReference>
<dbReference type="EMBL" id="AL353629">
    <property type="status" value="NOT_ANNOTATED_CDS"/>
    <property type="molecule type" value="Genomic_DNA"/>
</dbReference>
<dbReference type="EMBL" id="BC007879">
    <property type="protein sequence ID" value="AAH07879.2"/>
    <property type="molecule type" value="mRNA"/>
</dbReference>
<dbReference type="EMBL" id="BC098584">
    <property type="protein sequence ID" value="AAH98584.1"/>
    <property type="molecule type" value="mRNA"/>
</dbReference>
<dbReference type="EMBL" id="BC111736">
    <property type="protein sequence ID" value="AAI11737.1"/>
    <property type="molecule type" value="mRNA"/>
</dbReference>
<dbReference type="EMBL" id="D80005">
    <property type="protein sequence ID" value="BAA11500.2"/>
    <property type="molecule type" value="mRNA"/>
</dbReference>
<dbReference type="EMBL" id="AY266457">
    <property type="protein sequence ID" value="AAP31031.1"/>
    <property type="molecule type" value="mRNA"/>
</dbReference>
<dbReference type="EMBL" id="AF055017">
    <property type="protein sequence ID" value="AAC09364.1"/>
    <property type="molecule type" value="mRNA"/>
</dbReference>
<dbReference type="CCDS" id="CCDS6706.1">
    <molecule id="Q9NZB2-1"/>
</dbReference>
<dbReference type="CCDS" id="CCDS75859.1">
    <molecule id="Q9NZB2-2"/>
</dbReference>
<dbReference type="RefSeq" id="NP_001273651.1">
    <property type="nucleotide sequence ID" value="NM_001286722.1"/>
</dbReference>
<dbReference type="RefSeq" id="NP_001273652.1">
    <molecule id="Q9NZB2-5"/>
    <property type="nucleotide sequence ID" value="NM_001286723.2"/>
</dbReference>
<dbReference type="RefSeq" id="NP_001273653.1">
    <molecule id="Q9NZB2-2"/>
    <property type="nucleotide sequence ID" value="NM_001286724.2"/>
</dbReference>
<dbReference type="RefSeq" id="NP_055427.2">
    <molecule id="Q9NZB2-1"/>
    <property type="nucleotide sequence ID" value="NM_014612.4"/>
</dbReference>
<dbReference type="RefSeq" id="XP_011516714.1">
    <molecule id="Q9NZB2-6"/>
    <property type="nucleotide sequence ID" value="XM_011518412.3"/>
</dbReference>
<dbReference type="RefSeq" id="XP_047279037.1">
    <molecule id="Q9NZB2-4"/>
    <property type="nucleotide sequence ID" value="XM_047423081.1"/>
</dbReference>
<dbReference type="RefSeq" id="XP_054218476.1">
    <molecule id="Q9NZB2-6"/>
    <property type="nucleotide sequence ID" value="XM_054362501.1"/>
</dbReference>
<dbReference type="RefSeq" id="XP_054218481.1">
    <molecule id="Q9NZB2-4"/>
    <property type="nucleotide sequence ID" value="XM_054362506.1"/>
</dbReference>
<dbReference type="BioGRID" id="116805">
    <property type="interactions" value="373"/>
</dbReference>
<dbReference type="FunCoup" id="Q9NZB2">
    <property type="interactions" value="4188"/>
</dbReference>
<dbReference type="IntAct" id="Q9NZB2">
    <property type="interactions" value="241"/>
</dbReference>
<dbReference type="MINT" id="Q9NZB2"/>
<dbReference type="STRING" id="9606.ENSP00000277165"/>
<dbReference type="ChEMBL" id="CHEMBL4295966"/>
<dbReference type="GlyGen" id="Q9NZB2">
    <property type="glycosylation" value="2 sites, 1 N-linked glycan (1 site), 1 O-linked glycan (1 site)"/>
</dbReference>
<dbReference type="iPTMnet" id="Q9NZB2"/>
<dbReference type="PhosphoSitePlus" id="Q9NZB2"/>
<dbReference type="SwissPalm" id="Q9NZB2"/>
<dbReference type="BioMuta" id="FAM120A"/>
<dbReference type="DMDM" id="158523294"/>
<dbReference type="jPOST" id="Q9NZB2"/>
<dbReference type="MassIVE" id="Q9NZB2"/>
<dbReference type="PaxDb" id="9606-ENSP00000277165"/>
<dbReference type="PeptideAtlas" id="Q9NZB2"/>
<dbReference type="ProteomicsDB" id="83345">
    <molecule id="Q9NZB2-1"/>
</dbReference>
<dbReference type="ProteomicsDB" id="83346">
    <molecule id="Q9NZB2-2"/>
</dbReference>
<dbReference type="ProteomicsDB" id="83347">
    <molecule id="Q9NZB2-4"/>
</dbReference>
<dbReference type="ProteomicsDB" id="83348">
    <molecule id="Q9NZB2-5"/>
</dbReference>
<dbReference type="ProteomicsDB" id="83349">
    <molecule id="Q9NZB2-6"/>
</dbReference>
<dbReference type="Pumba" id="Q9NZB2"/>
<dbReference type="Antibodypedia" id="13858">
    <property type="antibodies" value="129 antibodies from 30 providers"/>
</dbReference>
<dbReference type="DNASU" id="23196"/>
<dbReference type="Ensembl" id="ENST00000277165.11">
    <molecule id="Q9NZB2-1"/>
    <property type="protein sequence ID" value="ENSP00000277165.5"/>
    <property type="gene ID" value="ENSG00000048828.18"/>
</dbReference>
<dbReference type="Ensembl" id="ENST00000375389.7">
    <molecule id="Q9NZB2-2"/>
    <property type="protein sequence ID" value="ENSP00000364538.3"/>
    <property type="gene ID" value="ENSG00000048828.18"/>
</dbReference>
<dbReference type="GeneID" id="23196"/>
<dbReference type="KEGG" id="hsa:23196"/>
<dbReference type="MANE-Select" id="ENST00000277165.11">
    <property type="protein sequence ID" value="ENSP00000277165.5"/>
    <property type="RefSeq nucleotide sequence ID" value="NM_014612.5"/>
    <property type="RefSeq protein sequence ID" value="NP_055427.2"/>
</dbReference>
<dbReference type="UCSC" id="uc004atv.5">
    <molecule id="Q9NZB2-1"/>
    <property type="organism name" value="human"/>
</dbReference>
<dbReference type="AGR" id="HGNC:13247"/>
<dbReference type="CTD" id="23196"/>
<dbReference type="DisGeNET" id="23196"/>
<dbReference type="GeneCards" id="FAM120A"/>
<dbReference type="HGNC" id="HGNC:13247">
    <property type="gene designation" value="FAM120A"/>
</dbReference>
<dbReference type="HPA" id="ENSG00000048828">
    <property type="expression patterns" value="Low tissue specificity"/>
</dbReference>
<dbReference type="MalaCards" id="FAM120A"/>
<dbReference type="MIM" id="612265">
    <property type="type" value="gene"/>
</dbReference>
<dbReference type="neXtProt" id="NX_Q9NZB2"/>
<dbReference type="OpenTargets" id="ENSG00000048828"/>
<dbReference type="PharmGKB" id="PA134954136"/>
<dbReference type="VEuPathDB" id="HostDB:ENSG00000048828"/>
<dbReference type="eggNOG" id="ENOG502QQNQ">
    <property type="taxonomic scope" value="Eukaryota"/>
</dbReference>
<dbReference type="GeneTree" id="ENSGT00530000063168"/>
<dbReference type="HOGENOM" id="CLU_008339_2_0_1"/>
<dbReference type="InParanoid" id="Q9NZB2"/>
<dbReference type="OMA" id="YILSPQY"/>
<dbReference type="OrthoDB" id="10061469at2759"/>
<dbReference type="PAN-GO" id="Q9NZB2">
    <property type="GO annotations" value="1 GO annotation based on evolutionary models"/>
</dbReference>
<dbReference type="PhylomeDB" id="Q9NZB2"/>
<dbReference type="TreeFam" id="TF328642"/>
<dbReference type="PathwayCommons" id="Q9NZB2"/>
<dbReference type="SignaLink" id="Q9NZB2"/>
<dbReference type="BioGRID-ORCS" id="23196">
    <property type="hits" value="27 hits in 1153 CRISPR screens"/>
</dbReference>
<dbReference type="CD-CODE" id="232F8A39">
    <property type="entry name" value="P-body"/>
</dbReference>
<dbReference type="CD-CODE" id="DEE660B4">
    <property type="entry name" value="Stress granule"/>
</dbReference>
<dbReference type="ChiTaRS" id="FAM120A">
    <property type="organism name" value="human"/>
</dbReference>
<dbReference type="GeneWiki" id="FAM120A"/>
<dbReference type="GenomeRNAi" id="23196"/>
<dbReference type="Pharos" id="Q9NZB2">
    <property type="development level" value="Tbio"/>
</dbReference>
<dbReference type="PRO" id="PR:Q9NZB2"/>
<dbReference type="Proteomes" id="UP000005640">
    <property type="component" value="Chromosome 9"/>
</dbReference>
<dbReference type="RNAct" id="Q9NZB2">
    <property type="molecule type" value="protein"/>
</dbReference>
<dbReference type="Bgee" id="ENSG00000048828">
    <property type="expression patterns" value="Expressed in tibia and 217 other cell types or tissues"/>
</dbReference>
<dbReference type="ExpressionAtlas" id="Q9NZB2">
    <property type="expression patterns" value="baseline and differential"/>
</dbReference>
<dbReference type="GO" id="GO:0005829">
    <property type="term" value="C:cytosol"/>
    <property type="evidence" value="ECO:0000314"/>
    <property type="project" value="HPA"/>
</dbReference>
<dbReference type="GO" id="GO:0016020">
    <property type="term" value="C:membrane"/>
    <property type="evidence" value="ECO:0007005"/>
    <property type="project" value="UniProtKB"/>
</dbReference>
<dbReference type="GO" id="GO:0005634">
    <property type="term" value="C:nucleus"/>
    <property type="evidence" value="ECO:0000318"/>
    <property type="project" value="GO_Central"/>
</dbReference>
<dbReference type="GO" id="GO:0005886">
    <property type="term" value="C:plasma membrane"/>
    <property type="evidence" value="ECO:0007669"/>
    <property type="project" value="UniProtKB-SubCell"/>
</dbReference>
<dbReference type="GO" id="GO:0003723">
    <property type="term" value="F:RNA binding"/>
    <property type="evidence" value="ECO:0007005"/>
    <property type="project" value="UniProtKB"/>
</dbReference>
<dbReference type="FunFam" id="3.40.50.1010:FF:000009">
    <property type="entry name" value="Constitutive coactivator of PPAR-gamma-like protein 1"/>
    <property type="match status" value="1"/>
</dbReference>
<dbReference type="Gene3D" id="3.40.50.1010">
    <property type="entry name" value="5'-nuclease"/>
    <property type="match status" value="1"/>
</dbReference>
<dbReference type="InterPro" id="IPR026784">
    <property type="entry name" value="Coact_PPARg"/>
</dbReference>
<dbReference type="InterPro" id="IPR029060">
    <property type="entry name" value="PIN-like_dom_sf"/>
</dbReference>
<dbReference type="PANTHER" id="PTHR15976">
    <property type="entry name" value="CONSTITUTIVE COACTIVATOR OF PEROXISOME PROLIFERATOR-ACTIVATED RECEPTOR GAMMA"/>
    <property type="match status" value="1"/>
</dbReference>
<dbReference type="PANTHER" id="PTHR15976:SF14">
    <property type="entry name" value="CONSTITUTIVE COACTIVATOR OF PPAR-GAMMA-LIKE PROTEIN 1"/>
    <property type="match status" value="1"/>
</dbReference>
<dbReference type="SUPFAM" id="SSF88723">
    <property type="entry name" value="PIN domain-like"/>
    <property type="match status" value="1"/>
</dbReference>
<evidence type="ECO:0000250" key="1">
    <source>
        <dbReference type="UniProtKB" id="Q6A0A9"/>
    </source>
</evidence>
<evidence type="ECO:0000256" key="2">
    <source>
        <dbReference type="SAM" id="MobiDB-lite"/>
    </source>
</evidence>
<evidence type="ECO:0000269" key="3">
    <source>
    </source>
</evidence>
<evidence type="ECO:0000269" key="4">
    <source>
    </source>
</evidence>
<evidence type="ECO:0000269" key="5">
    <source>
    </source>
</evidence>
<evidence type="ECO:0000303" key="6">
    <source>
    </source>
</evidence>
<evidence type="ECO:0000303" key="7">
    <source>
    </source>
</evidence>
<evidence type="ECO:0000303" key="8">
    <source>
    </source>
</evidence>
<evidence type="ECO:0000303" key="9">
    <source ref="1"/>
</evidence>
<evidence type="ECO:0000303" key="10">
    <source ref="7"/>
</evidence>
<evidence type="ECO:0000305" key="11"/>
<evidence type="ECO:0000305" key="12">
    <source>
    </source>
</evidence>
<evidence type="ECO:0007744" key="13">
    <source>
    </source>
</evidence>
<evidence type="ECO:0007744" key="14">
    <source>
    </source>
</evidence>
<evidence type="ECO:0007744" key="15">
    <source>
    </source>
</evidence>
<evidence type="ECO:0007744" key="16">
    <source>
    </source>
</evidence>
<evidence type="ECO:0007744" key="17">
    <source>
    </source>
</evidence>
<comment type="function">
    <text evidence="4">Component of the oxidative stress-induced survival signaling. May regulate the activation of SRC family protein kinases (PubMed:19015244). May act as a scaffolding protein enabling SRC family protein kinases to phosphorylate and activate PI3-kinase (PubMed:19015244). Binds IGF2 RNA and promotes the production of IGF2 protein (PubMed:19015244).</text>
</comment>
<comment type="subunit">
    <text evidence="1 4">Interacts with PURA (By similarity). Interacts with SRC family protein kinases YES1, SRC and FYN (PubMed:19015244). Upon tyrosine phosphorylation, interacts with PIK3R1 (PubMed:19015244). Interacts with IGF2BP1/IMP-1 in an RNA-dependent manner (PubMed:19015244).</text>
</comment>
<comment type="interaction">
    <interactant intactId="EBI-1171960">
        <id>Q9NZB2</id>
    </interactant>
    <interactant intactId="EBI-373471">
        <id>Q92900</id>
        <label>UPF1</label>
    </interactant>
    <organismsDiffer>false</organismsDiffer>
    <experiments>3</experiments>
</comment>
<comment type="subcellular location">
    <subcellularLocation>
        <location evidence="4">Cytoplasm</location>
    </subcellularLocation>
    <subcellularLocation>
        <location evidence="4">Cell membrane</location>
        <topology evidence="12">Peripheral membrane protein</topology>
        <orientation evidence="12">Cytoplasmic side</orientation>
    </subcellularLocation>
    <text evidence="4">Translocates from the cytosol to plasma membrane after UV irradiation.</text>
</comment>
<comment type="alternative products">
    <event type="alternative splicing"/>
    <isoform>
        <id>Q9NZB2-1</id>
        <name>A</name>
        <sequence type="displayed"/>
    </isoform>
    <isoform>
        <id>Q9NZB2-2</id>
        <name>B</name>
        <sequence type="described" ref="VSP_004147 VSP_004148"/>
    </isoform>
    <isoform>
        <id>Q9NZB2-4</id>
        <name>D</name>
        <sequence type="described" ref="VSP_017280"/>
    </isoform>
    <isoform>
        <id>Q9NZB2-5</id>
        <name>E</name>
        <sequence type="described" ref="VSP_017278 VSP_017279"/>
    </isoform>
    <isoform>
        <id>Q9NZB2-6</id>
        <name>F</name>
        <sequence type="described" ref="VSP_036324"/>
    </isoform>
</comment>
<comment type="tissue specificity">
    <text evidence="3 4">Widely expressed (PubMed:14585507). In gastric mucosa, detected in the bottom region of the foveolar epithelium (at protein level) (PubMed:19015244).</text>
</comment>
<comment type="PTM">
    <text evidence="5">Arg-982 is dimethylated, probably to asymmetric dimethylarginine.</text>
</comment>
<comment type="PTM">
    <text evidence="4">Phosphorylated on tyrosine by SRC family protein kinases upon oxidative stress, for instance following UV irradiation.</text>
</comment>
<comment type="disease">
    <text evidence="4">May play a role in the progression of scirrhous-type gastric cancer by supporting cancer cell survival during oxidative stress.</text>
</comment>
<comment type="similarity">
    <text evidence="11">Belongs to the constitutive coactivator of PPAR-gamma family.</text>
</comment>
<comment type="sequence caution" evidence="11">
    <conflict type="frameshift">
        <sequence resource="EMBL-CDS" id="AAF72866"/>
    </conflict>
</comment>
<proteinExistence type="evidence at protein level"/>
<reference key="1">
    <citation type="submission" date="1999-11" db="EMBL/GenBank/DDBJ databases">
        <title>Generating full-length coding sequence for 2 alternate transcripts of a novel gene C9orf10 and screening HSN-I patients for mutations.</title>
        <authorList>
            <person name="Brahmbhatt S.B."/>
            <person name="Hulme D.J."/>
            <person name="Dawkins J.L."/>
            <person name="Nicholson G.A."/>
        </authorList>
    </citation>
    <scope>NUCLEOTIDE SEQUENCE [MRNA] (ISOFORM B)</scope>
    <scope>NUCLEOTIDE SEQUENCE [MRNA] OF 1-1102 (ISOFORM A)</scope>
</reference>
<reference key="2">
    <citation type="journal article" date="2004" name="Nature">
        <title>DNA sequence and analysis of human chromosome 9.</title>
        <authorList>
            <person name="Humphray S.J."/>
            <person name="Oliver K."/>
            <person name="Hunt A.R."/>
            <person name="Plumb R.W."/>
            <person name="Loveland J.E."/>
            <person name="Howe K.L."/>
            <person name="Andrews T.D."/>
            <person name="Searle S."/>
            <person name="Hunt S.E."/>
            <person name="Scott C.E."/>
            <person name="Jones M.C."/>
            <person name="Ainscough R."/>
            <person name="Almeida J.P."/>
            <person name="Ambrose K.D."/>
            <person name="Ashwell R.I.S."/>
            <person name="Babbage A.K."/>
            <person name="Babbage S."/>
            <person name="Bagguley C.L."/>
            <person name="Bailey J."/>
            <person name="Banerjee R."/>
            <person name="Barker D.J."/>
            <person name="Barlow K.F."/>
            <person name="Bates K."/>
            <person name="Beasley H."/>
            <person name="Beasley O."/>
            <person name="Bird C.P."/>
            <person name="Bray-Allen S."/>
            <person name="Brown A.J."/>
            <person name="Brown J.Y."/>
            <person name="Burford D."/>
            <person name="Burrill W."/>
            <person name="Burton J."/>
            <person name="Carder C."/>
            <person name="Carter N.P."/>
            <person name="Chapman J.C."/>
            <person name="Chen Y."/>
            <person name="Clarke G."/>
            <person name="Clark S.Y."/>
            <person name="Clee C.M."/>
            <person name="Clegg S."/>
            <person name="Collier R.E."/>
            <person name="Corby N."/>
            <person name="Crosier M."/>
            <person name="Cummings A.T."/>
            <person name="Davies J."/>
            <person name="Dhami P."/>
            <person name="Dunn M."/>
            <person name="Dutta I."/>
            <person name="Dyer L.W."/>
            <person name="Earthrowl M.E."/>
            <person name="Faulkner L."/>
            <person name="Fleming C.J."/>
            <person name="Frankish A."/>
            <person name="Frankland J.A."/>
            <person name="French L."/>
            <person name="Fricker D.G."/>
            <person name="Garner P."/>
            <person name="Garnett J."/>
            <person name="Ghori J."/>
            <person name="Gilbert J.G.R."/>
            <person name="Glison C."/>
            <person name="Grafham D.V."/>
            <person name="Gribble S."/>
            <person name="Griffiths C."/>
            <person name="Griffiths-Jones S."/>
            <person name="Grocock R."/>
            <person name="Guy J."/>
            <person name="Hall R.E."/>
            <person name="Hammond S."/>
            <person name="Harley J.L."/>
            <person name="Harrison E.S.I."/>
            <person name="Hart E.A."/>
            <person name="Heath P.D."/>
            <person name="Henderson C.D."/>
            <person name="Hopkins B.L."/>
            <person name="Howard P.J."/>
            <person name="Howden P.J."/>
            <person name="Huckle E."/>
            <person name="Johnson C."/>
            <person name="Johnson D."/>
            <person name="Joy A.A."/>
            <person name="Kay M."/>
            <person name="Keenan S."/>
            <person name="Kershaw J.K."/>
            <person name="Kimberley A.M."/>
            <person name="King A."/>
            <person name="Knights A."/>
            <person name="Laird G.K."/>
            <person name="Langford C."/>
            <person name="Lawlor S."/>
            <person name="Leongamornlert D.A."/>
            <person name="Leversha M."/>
            <person name="Lloyd C."/>
            <person name="Lloyd D.M."/>
            <person name="Lovell J."/>
            <person name="Martin S."/>
            <person name="Mashreghi-Mohammadi M."/>
            <person name="Matthews L."/>
            <person name="McLaren S."/>
            <person name="McLay K.E."/>
            <person name="McMurray A."/>
            <person name="Milne S."/>
            <person name="Nickerson T."/>
            <person name="Nisbett J."/>
            <person name="Nordsiek G."/>
            <person name="Pearce A.V."/>
            <person name="Peck A.I."/>
            <person name="Porter K.M."/>
            <person name="Pandian R."/>
            <person name="Pelan S."/>
            <person name="Phillimore B."/>
            <person name="Povey S."/>
            <person name="Ramsey Y."/>
            <person name="Rand V."/>
            <person name="Scharfe M."/>
            <person name="Sehra H.K."/>
            <person name="Shownkeen R."/>
            <person name="Sims S.K."/>
            <person name="Skuce C.D."/>
            <person name="Smith M."/>
            <person name="Steward C.A."/>
            <person name="Swarbreck D."/>
            <person name="Sycamore N."/>
            <person name="Tester J."/>
            <person name="Thorpe A."/>
            <person name="Tracey A."/>
            <person name="Tromans A."/>
            <person name="Thomas D.W."/>
            <person name="Wall M."/>
            <person name="Wallis J.M."/>
            <person name="West A.P."/>
            <person name="Whitehead S.L."/>
            <person name="Willey D.L."/>
            <person name="Williams S.A."/>
            <person name="Wilming L."/>
            <person name="Wray P.W."/>
            <person name="Young L."/>
            <person name="Ashurst J.L."/>
            <person name="Coulson A."/>
            <person name="Blocker H."/>
            <person name="Durbin R.M."/>
            <person name="Sulston J.E."/>
            <person name="Hubbard T."/>
            <person name="Jackson M.J."/>
            <person name="Bentley D.R."/>
            <person name="Beck S."/>
            <person name="Rogers J."/>
            <person name="Dunham I."/>
        </authorList>
    </citation>
    <scope>NUCLEOTIDE SEQUENCE [LARGE SCALE GENOMIC DNA]</scope>
</reference>
<reference key="3">
    <citation type="journal article" date="2004" name="Genome Res.">
        <title>The status, quality, and expansion of the NIH full-length cDNA project: the Mammalian Gene Collection (MGC).</title>
        <authorList>
            <consortium name="The MGC Project Team"/>
        </authorList>
    </citation>
    <scope>NUCLEOTIDE SEQUENCE [LARGE SCALE MRNA] (ISOFORM A)</scope>
    <scope>NUCLEOTIDE SEQUENCE [LARGE SCALE MRNA] OF 157-1118 (ISOFORM E)</scope>
    <source>
        <tissue>Lung</tissue>
        <tissue>Placenta</tissue>
    </source>
</reference>
<reference key="4">
    <citation type="journal article" date="1996" name="DNA Res.">
        <title>Prediction of the coding sequences of unidentified human genes. V. The coding sequences of 40 new genes (KIAA0161-KIAA0200) deduced by analysis of cDNA clones from human cell line KG-1.</title>
        <authorList>
            <person name="Nagase T."/>
            <person name="Seki N."/>
            <person name="Ishikawa K."/>
            <person name="Tanaka A."/>
            <person name="Nomura N."/>
        </authorList>
    </citation>
    <scope>NUCLEOTIDE SEQUENCE [LARGE SCALE MRNA] OF 8-1069 (ISOFORM A)</scope>
    <source>
        <tissue>Bone marrow</tissue>
    </source>
</reference>
<reference key="5">
    <citation type="submission" date="2005-06" db="EMBL/GenBank/DDBJ databases">
        <authorList>
            <person name="Ohara O."/>
            <person name="Nagase T."/>
            <person name="Kikuno R."/>
            <person name="Nomura N."/>
        </authorList>
    </citation>
    <scope>SEQUENCE REVISION</scope>
</reference>
<reference key="6">
    <citation type="journal article" date="2003" name="Gene">
        <title>The human gene CXorf17 encodes a member of a novel family of putative transmembrane proteins: cDNA cloning and characterization of CXorf17 and its mouse ortholog orf34.</title>
        <authorList>
            <person name="Holden S."/>
            <person name="Raymond F.L."/>
        </authorList>
    </citation>
    <scope>NUCLEOTIDE SEQUENCE [MRNA] OF 393-512 (ISOFORM F)</scope>
    <scope>TISSUE SPECIFICITY</scope>
</reference>
<reference key="7">
    <citation type="submission" date="1998-03" db="EMBL/GenBank/DDBJ databases">
        <authorList>
            <person name="Yu W."/>
            <person name="Gibbs R.A."/>
        </authorList>
    </citation>
    <scope>NUCLEOTIDE SEQUENCE [LARGE SCALE MRNA] OF 579-1069 (ISOFORM D)</scope>
    <source>
        <tissue>Brain</tissue>
    </source>
</reference>
<reference key="8">
    <citation type="journal article" date="2008" name="J. Proteome Res.">
        <title>Combining protein-based IMAC, peptide-based IMAC, and MudPIT for efficient phosphoproteomic analysis.</title>
        <authorList>
            <person name="Cantin G.T."/>
            <person name="Yi W."/>
            <person name="Lu B."/>
            <person name="Park S.K."/>
            <person name="Xu T."/>
            <person name="Lee J.-D."/>
            <person name="Yates J.R. III"/>
        </authorList>
    </citation>
    <scope>PHOSPHORYLATION [LARGE SCALE ANALYSIS] AT SER-1023</scope>
    <scope>IDENTIFICATION BY MASS SPECTROMETRY [LARGE SCALE ANALYSIS]</scope>
    <source>
        <tissue>Cervix carcinoma</tissue>
    </source>
</reference>
<reference key="9">
    <citation type="journal article" date="2008" name="Proc. Natl. Acad. Sci. U.S.A.">
        <title>A quantitative atlas of mitotic phosphorylation.</title>
        <authorList>
            <person name="Dephoure N."/>
            <person name="Zhou C."/>
            <person name="Villen J."/>
            <person name="Beausoleil S.A."/>
            <person name="Bakalarski C.E."/>
            <person name="Elledge S.J."/>
            <person name="Gygi S.P."/>
        </authorList>
    </citation>
    <scope>IDENTIFICATION BY MASS SPECTROMETRY [LARGE SCALE ANALYSIS]</scope>
    <source>
        <tissue>Cervix carcinoma</tissue>
    </source>
</reference>
<reference key="10">
    <citation type="journal article" date="2009" name="Mol. Cell. Biol.">
        <title>A novel RNA-binding protein, Ossa/C9orf10, regulates activity of Src kinases to protect cells from oxidative stress-induced apoptosis.</title>
        <authorList>
            <person name="Tanaka M."/>
            <person name="Sasaki K."/>
            <person name="Kamata R."/>
            <person name="Hoshino Y."/>
            <person name="Yanagihara K."/>
            <person name="Sakai R."/>
        </authorList>
    </citation>
    <scope>FUNCTION</scope>
    <scope>INTERACTION WITH IGF2BP1; FYN; PIK3R1; SRC AND YES1</scope>
    <scope>SUBCELLULAR LOCATION</scope>
    <scope>PHOSPHORYLATION</scope>
    <scope>TISSUE SPECIFICITY</scope>
    <scope>POTENTIAL ROLE IN CANCER PROGRESSION</scope>
</reference>
<reference key="11">
    <citation type="journal article" date="2009" name="Sci. Signal.">
        <title>Quantitative phosphoproteomic analysis of T cell receptor signaling reveals system-wide modulation of protein-protein interactions.</title>
        <authorList>
            <person name="Mayya V."/>
            <person name="Lundgren D.H."/>
            <person name="Hwang S.-I."/>
            <person name="Rezaul K."/>
            <person name="Wu L."/>
            <person name="Eng J.K."/>
            <person name="Rodionov V."/>
            <person name="Han D.K."/>
        </authorList>
    </citation>
    <scope>PHOSPHORYLATION [LARGE SCALE ANALYSIS] AT SER-1044; SER-1045 AND SER-1048</scope>
    <scope>IDENTIFICATION BY MASS SPECTROMETRY [LARGE SCALE ANALYSIS]</scope>
    <source>
        <tissue>Leukemic T-cell</tissue>
    </source>
</reference>
<reference key="12">
    <citation type="journal article" date="2011" name="BMC Syst. Biol.">
        <title>Initial characterization of the human central proteome.</title>
        <authorList>
            <person name="Burkard T.R."/>
            <person name="Planyavsky M."/>
            <person name="Kaupe I."/>
            <person name="Breitwieser F.P."/>
            <person name="Buerckstuemmer T."/>
            <person name="Bennett K.L."/>
            <person name="Superti-Furga G."/>
            <person name="Colinge J."/>
        </authorList>
    </citation>
    <scope>IDENTIFICATION BY MASS SPECTROMETRY [LARGE SCALE ANALYSIS]</scope>
</reference>
<reference key="13">
    <citation type="journal article" date="2013" name="J. Proteome Res.">
        <title>Toward a comprehensive characterization of a human cancer cell phosphoproteome.</title>
        <authorList>
            <person name="Zhou H."/>
            <person name="Di Palma S."/>
            <person name="Preisinger C."/>
            <person name="Peng M."/>
            <person name="Polat A.N."/>
            <person name="Heck A.J."/>
            <person name="Mohammed S."/>
        </authorList>
    </citation>
    <scope>PHOSPHORYLATION [LARGE SCALE ANALYSIS] AT THR-655 AND SER-1023</scope>
    <scope>IDENTIFICATION BY MASS SPECTROMETRY [LARGE SCALE ANALYSIS]</scope>
    <source>
        <tissue>Cervix carcinoma</tissue>
        <tissue>Erythroleukemia</tissue>
    </source>
</reference>
<reference key="14">
    <citation type="journal article" date="2014" name="J. Proteomics">
        <title>An enzyme assisted RP-RPLC approach for in-depth analysis of human liver phosphoproteome.</title>
        <authorList>
            <person name="Bian Y."/>
            <person name="Song C."/>
            <person name="Cheng K."/>
            <person name="Dong M."/>
            <person name="Wang F."/>
            <person name="Huang J."/>
            <person name="Sun D."/>
            <person name="Wang L."/>
            <person name="Ye M."/>
            <person name="Zou H."/>
        </authorList>
    </citation>
    <scope>PHOSPHORYLATION [LARGE SCALE ANALYSIS] AT SER-960</scope>
    <scope>IDENTIFICATION BY MASS SPECTROMETRY [LARGE SCALE ANALYSIS]</scope>
    <source>
        <tissue>Liver</tissue>
    </source>
</reference>
<reference key="15">
    <citation type="journal article" date="2014" name="Mol. Cell. Proteomics">
        <title>Immunoaffinity enrichment and mass spectrometry analysis of protein methylation.</title>
        <authorList>
            <person name="Guo A."/>
            <person name="Gu H."/>
            <person name="Zhou J."/>
            <person name="Mulhern D."/>
            <person name="Wang Y."/>
            <person name="Lee K.A."/>
            <person name="Yang V."/>
            <person name="Aguiar M."/>
            <person name="Kornhauser J."/>
            <person name="Jia X."/>
            <person name="Ren J."/>
            <person name="Beausoleil S.A."/>
            <person name="Silva J.C."/>
            <person name="Vemulapalli V."/>
            <person name="Bedford M.T."/>
            <person name="Comb M.J."/>
        </authorList>
    </citation>
    <scope>METHYLATION [LARGE SCALE ANALYSIS] AT ARG-873; ARG-884; ARG-886; ARG-982 AND ARG-986</scope>
    <scope>IDENTIFICATION BY MASS SPECTROMETRY [LARGE SCALE ANALYSIS]</scope>
    <source>
        <tissue>Colon carcinoma</tissue>
    </source>
</reference>
<gene>
    <name type="primary">FAM120A</name>
    <name type="synonym">C9orf10</name>
    <name type="synonym">KIAA0183</name>
    <name evidence="8" type="synonym">OSSA</name>
</gene>
<name>F120A_HUMAN</name>
<protein>
    <recommendedName>
        <fullName>Constitutive coactivator of PPAR-gamma-like protein 1</fullName>
    </recommendedName>
    <alternativeName>
        <fullName evidence="8">Oxidative stress-associated SRC activator</fullName>
    </alternativeName>
    <alternativeName>
        <fullName>Protein FAM120A</fullName>
    </alternativeName>
</protein>
<keyword id="KW-0007">Acetylation</keyword>
<keyword id="KW-0025">Alternative splicing</keyword>
<keyword id="KW-1003">Cell membrane</keyword>
<keyword id="KW-0963">Cytoplasm</keyword>
<keyword id="KW-0472">Membrane</keyword>
<keyword id="KW-0488">Methylation</keyword>
<keyword id="KW-0597">Phosphoprotein</keyword>
<keyword id="KW-1267">Proteomics identification</keyword>
<keyword id="KW-1185">Reference proteome</keyword>
<keyword id="KW-0694">RNA-binding</keyword>
<keyword id="KW-0043">Tumor suppressor</keyword>
<accession>Q9NZB2</accession>
<accession>A6NGU0</accession>
<accession>C4AMC6</accession>
<accession>O60649</accession>
<accession>Q14688</accession>
<accession>Q4VXF4</accession>
<accession>Q4VXF5</accession>
<accession>Q4VXG2</accession>
<accession>Q86V69</accession>
<accession>Q96I21</accession>
<accession>Q9NZB1</accession>